<dbReference type="EC" id="6.1.1.5" evidence="9"/>
<dbReference type="EMBL" id="U00096">
    <property type="protein sequence ID" value="AAC73137.1"/>
    <property type="molecule type" value="Genomic_DNA"/>
</dbReference>
<dbReference type="EMBL" id="AP009048">
    <property type="protein sequence ID" value="BAB96595.2"/>
    <property type="molecule type" value="Genomic_DNA"/>
</dbReference>
<dbReference type="EMBL" id="M10428">
    <property type="protein sequence ID" value="AAA24606.1"/>
    <property type="molecule type" value="Genomic_DNA"/>
</dbReference>
<dbReference type="EMBL" id="X00776">
    <property type="protein sequence ID" value="CAA25352.1"/>
    <property type="molecule type" value="Genomic_DNA"/>
</dbReference>
<dbReference type="EMBL" id="K01990">
    <property type="protein sequence ID" value="AAA24091.1"/>
    <property type="molecule type" value="Genomic_DNA"/>
</dbReference>
<dbReference type="PIR" id="B64723">
    <property type="entry name" value="SYECIT"/>
</dbReference>
<dbReference type="RefSeq" id="NP_414567.1">
    <property type="nucleotide sequence ID" value="NC_000913.3"/>
</dbReference>
<dbReference type="RefSeq" id="WP_001286857.1">
    <property type="nucleotide sequence ID" value="NZ_STEB01000010.1"/>
</dbReference>
<dbReference type="SMR" id="P00956"/>
<dbReference type="BioGRID" id="4261375">
    <property type="interactions" value="43"/>
</dbReference>
<dbReference type="BioGRID" id="849163">
    <property type="interactions" value="6"/>
</dbReference>
<dbReference type="DIP" id="DIP-10017N"/>
<dbReference type="FunCoup" id="P00956">
    <property type="interactions" value="783"/>
</dbReference>
<dbReference type="IntAct" id="P00956">
    <property type="interactions" value="17"/>
</dbReference>
<dbReference type="STRING" id="511145.b0026"/>
<dbReference type="BindingDB" id="P00956"/>
<dbReference type="ChEMBL" id="CHEMBL3657"/>
<dbReference type="DrugCentral" id="P00956"/>
<dbReference type="iPTMnet" id="P00956"/>
<dbReference type="jPOST" id="P00956"/>
<dbReference type="PaxDb" id="511145-b0026"/>
<dbReference type="EnsemblBacteria" id="AAC73137">
    <property type="protein sequence ID" value="AAC73137"/>
    <property type="gene ID" value="b0026"/>
</dbReference>
<dbReference type="GeneID" id="93777410"/>
<dbReference type="GeneID" id="944761"/>
<dbReference type="KEGG" id="ecj:JW0024"/>
<dbReference type="KEGG" id="eco:b0026"/>
<dbReference type="KEGG" id="ecoc:C3026_00125"/>
<dbReference type="PATRIC" id="fig|1411691.4.peg.2259"/>
<dbReference type="EchoBASE" id="EB0487"/>
<dbReference type="eggNOG" id="COG0060">
    <property type="taxonomic scope" value="Bacteria"/>
</dbReference>
<dbReference type="HOGENOM" id="CLU_001493_7_1_6"/>
<dbReference type="InParanoid" id="P00956"/>
<dbReference type="OMA" id="HCWRCKT"/>
<dbReference type="OrthoDB" id="9810365at2"/>
<dbReference type="PhylomeDB" id="P00956"/>
<dbReference type="BioCyc" id="EcoCyc:ILES-MONOMER"/>
<dbReference type="BioCyc" id="MetaCyc:ILES-MONOMER"/>
<dbReference type="BRENDA" id="6.1.1.5">
    <property type="organism ID" value="2026"/>
</dbReference>
<dbReference type="SABIO-RK" id="P00956"/>
<dbReference type="PRO" id="PR:P00956"/>
<dbReference type="Proteomes" id="UP000000625">
    <property type="component" value="Chromosome"/>
</dbReference>
<dbReference type="GO" id="GO:0005829">
    <property type="term" value="C:cytosol"/>
    <property type="evidence" value="ECO:0000314"/>
    <property type="project" value="EcoCyc"/>
</dbReference>
<dbReference type="GO" id="GO:0002161">
    <property type="term" value="F:aminoacyl-tRNA deacylase activity"/>
    <property type="evidence" value="ECO:0007669"/>
    <property type="project" value="InterPro"/>
</dbReference>
<dbReference type="GO" id="GO:0005524">
    <property type="term" value="F:ATP binding"/>
    <property type="evidence" value="ECO:0007669"/>
    <property type="project" value="UniProtKB-UniRule"/>
</dbReference>
<dbReference type="GO" id="GO:0004822">
    <property type="term" value="F:isoleucine-tRNA ligase activity"/>
    <property type="evidence" value="ECO:0000314"/>
    <property type="project" value="GO_Central"/>
</dbReference>
<dbReference type="GO" id="GO:0000049">
    <property type="term" value="F:tRNA binding"/>
    <property type="evidence" value="ECO:0007669"/>
    <property type="project" value="InterPro"/>
</dbReference>
<dbReference type="GO" id="GO:0008270">
    <property type="term" value="F:zinc ion binding"/>
    <property type="evidence" value="ECO:0000314"/>
    <property type="project" value="EcoCyc"/>
</dbReference>
<dbReference type="GO" id="GO:0006428">
    <property type="term" value="P:isoleucyl-tRNA aminoacylation"/>
    <property type="evidence" value="ECO:0000314"/>
    <property type="project" value="EcoCyc"/>
</dbReference>
<dbReference type="GO" id="GO:0046677">
    <property type="term" value="P:response to antibiotic"/>
    <property type="evidence" value="ECO:0007669"/>
    <property type="project" value="UniProtKB-KW"/>
</dbReference>
<dbReference type="CDD" id="cd07960">
    <property type="entry name" value="Anticodon_Ia_Ile_BEm"/>
    <property type="match status" value="1"/>
</dbReference>
<dbReference type="CDD" id="cd00818">
    <property type="entry name" value="IleRS_core"/>
    <property type="match status" value="1"/>
</dbReference>
<dbReference type="FunFam" id="1.10.730.20:FF:000001">
    <property type="entry name" value="Isoleucine--tRNA ligase"/>
    <property type="match status" value="1"/>
</dbReference>
<dbReference type="FunFam" id="3.40.50.620:FF:000042">
    <property type="entry name" value="Isoleucine--tRNA ligase"/>
    <property type="match status" value="1"/>
</dbReference>
<dbReference type="FunFam" id="3.40.50.620:FF:000048">
    <property type="entry name" value="Isoleucine--tRNA ligase"/>
    <property type="match status" value="1"/>
</dbReference>
<dbReference type="FunFam" id="3.90.740.10:FF:000002">
    <property type="entry name" value="Isoleucine--tRNA ligase"/>
    <property type="match status" value="1"/>
</dbReference>
<dbReference type="Gene3D" id="1.10.730.20">
    <property type="match status" value="1"/>
</dbReference>
<dbReference type="Gene3D" id="3.40.50.620">
    <property type="entry name" value="HUPs"/>
    <property type="match status" value="2"/>
</dbReference>
<dbReference type="Gene3D" id="3.90.740.10">
    <property type="entry name" value="Valyl/Leucyl/Isoleucyl-tRNA synthetase, editing domain"/>
    <property type="match status" value="1"/>
</dbReference>
<dbReference type="HAMAP" id="MF_02002">
    <property type="entry name" value="Ile_tRNA_synth_type1"/>
    <property type="match status" value="1"/>
</dbReference>
<dbReference type="InterPro" id="IPR001412">
    <property type="entry name" value="aa-tRNA-synth_I_CS"/>
</dbReference>
<dbReference type="InterPro" id="IPR002300">
    <property type="entry name" value="aa-tRNA-synth_Ia"/>
</dbReference>
<dbReference type="InterPro" id="IPR033708">
    <property type="entry name" value="Anticodon_Ile_BEm"/>
</dbReference>
<dbReference type="InterPro" id="IPR002301">
    <property type="entry name" value="Ile-tRNA-ligase"/>
</dbReference>
<dbReference type="InterPro" id="IPR023585">
    <property type="entry name" value="Ile-tRNA-ligase_type1"/>
</dbReference>
<dbReference type="InterPro" id="IPR050081">
    <property type="entry name" value="Ile-tRNA_ligase"/>
</dbReference>
<dbReference type="InterPro" id="IPR013155">
    <property type="entry name" value="M/V/L/I-tRNA-synth_anticd-bd"/>
</dbReference>
<dbReference type="InterPro" id="IPR014729">
    <property type="entry name" value="Rossmann-like_a/b/a_fold"/>
</dbReference>
<dbReference type="InterPro" id="IPR009080">
    <property type="entry name" value="tRNAsynth_Ia_anticodon-bd"/>
</dbReference>
<dbReference type="InterPro" id="IPR009008">
    <property type="entry name" value="Val/Leu/Ile-tRNA-synth_edit"/>
</dbReference>
<dbReference type="InterPro" id="IPR010663">
    <property type="entry name" value="Znf_FPG/IleRS"/>
</dbReference>
<dbReference type="NCBIfam" id="TIGR00392">
    <property type="entry name" value="ileS"/>
    <property type="match status" value="1"/>
</dbReference>
<dbReference type="PANTHER" id="PTHR42765:SF1">
    <property type="entry name" value="ISOLEUCINE--TRNA LIGASE, MITOCHONDRIAL"/>
    <property type="match status" value="1"/>
</dbReference>
<dbReference type="PANTHER" id="PTHR42765">
    <property type="entry name" value="SOLEUCYL-TRNA SYNTHETASE"/>
    <property type="match status" value="1"/>
</dbReference>
<dbReference type="Pfam" id="PF08264">
    <property type="entry name" value="Anticodon_1"/>
    <property type="match status" value="1"/>
</dbReference>
<dbReference type="Pfam" id="PF00133">
    <property type="entry name" value="tRNA-synt_1"/>
    <property type="match status" value="1"/>
</dbReference>
<dbReference type="Pfam" id="PF06827">
    <property type="entry name" value="zf-FPG_IleRS"/>
    <property type="match status" value="1"/>
</dbReference>
<dbReference type="PRINTS" id="PR00984">
    <property type="entry name" value="TRNASYNTHILE"/>
</dbReference>
<dbReference type="SUPFAM" id="SSF47323">
    <property type="entry name" value="Anticodon-binding domain of a subclass of class I aminoacyl-tRNA synthetases"/>
    <property type="match status" value="1"/>
</dbReference>
<dbReference type="SUPFAM" id="SSF52374">
    <property type="entry name" value="Nucleotidylyl transferase"/>
    <property type="match status" value="1"/>
</dbReference>
<dbReference type="SUPFAM" id="SSF50677">
    <property type="entry name" value="ValRS/IleRS/LeuRS editing domain"/>
    <property type="match status" value="1"/>
</dbReference>
<dbReference type="PROSITE" id="PS00178">
    <property type="entry name" value="AA_TRNA_LIGASE_I"/>
    <property type="match status" value="1"/>
</dbReference>
<sequence>MSDYKSTLNLPETGFPMRGDLAKREPGMLARWTDDDLYGIIRAAKKGKKTFILHDGPPYANGSIHIGHSVNKILKDIIVKSKGLSGYDSPYVPGWDCHGLPIELKVEQEYGKPGEKFTAAEFRAKCREYAATQVDGQRKDFIRLGVLGDWSHPYLTMDFKTEANIIRALGKIIGNGHLHKGAKPVHWCVDCRSALAEAEVEYYDKTSPSIDVAFQAVDQDALKAKFAVSNVNGPISLVIWTTTPWTLPANRAISIAPDFDYALVQIDGQAVILAKDLVESVMQRIGVTDYTILGTVKGAELELLRFTHPFMGFDVPAILGDHVTLDAGTGAVHTAPGHGPDDYVIGQKYGLETANPVGPDGTYLPGTYPTLDGVNVFKANDIVVALLQEKGALLHVEKMQHSYPCCWRHKTPIIFRATPQWFVSMDQKGLRAQSLKEIKGVQWIPDWGQARIESMVANRPDWCISRQRTWGVPMSLFVHKDTEELHPRTLELMEEVAKRVEVDGIQAWWDLDAKEILGDEADQYVKVPDTLDVWFDSGSTHSSVVDVRPEFAGHAADMYLEGSDQHRGWFMSSLMISTAMKGKAPYRQVLTHGFTVDGQGRKMSKSIGNTVSPQDVMNKLGADILRLWVASTDYTGEMAVSDEILKRAADSYRRIRNTARFLLANLNGFDPAKDMVKPEEMVVLDRWAVGCAKAAQEDILKAYEAYDFHEVVQRLMRFCSVEMGSFYLDIIKDRQYTAKADSVARRSCQTALYHIAEALVRWMAPILSFTADEVWGYLPGEREKYVFTGEWYEGLFGLADSEAMNDAFWDELLKVRGEVNKVIEQARADKKVGGSLEAAVTLYAEPELSAKLTALGDELRFVLLTSGATVADYNDAPADAQQSEVLKGLKVALSKAEGEKCPRCWHYTQDVGKVAEHAEICGRCVSNVAGDGEKRKFA</sequence>
<proteinExistence type="evidence at protein level"/>
<comment type="function">
    <text evidence="2 3 4 5 6 8 9 12">Catalyzes the attachment of isoleucine to tRNA(Ile). As IleRS can inadvertently accommodate and process structurally similar amino acids such as valine, to avoid such errors it has two additional distinct tRNA(Ile)-dependent editing activities. One activity is designated as 'pretransfer' editing and involves the hydrolysis of activated Val-AMP. The other activity is designated 'posttransfer' editing and involves deacylation of mischarged Val-tRNA(Ile).</text>
</comment>
<comment type="catalytic activity">
    <reaction evidence="9">
        <text>tRNA(Ile) + L-isoleucine + ATP = L-isoleucyl-tRNA(Ile) + AMP + diphosphate</text>
        <dbReference type="Rhea" id="RHEA:11060"/>
        <dbReference type="Rhea" id="RHEA-COMP:9666"/>
        <dbReference type="Rhea" id="RHEA-COMP:9695"/>
        <dbReference type="ChEBI" id="CHEBI:30616"/>
        <dbReference type="ChEBI" id="CHEBI:33019"/>
        <dbReference type="ChEBI" id="CHEBI:58045"/>
        <dbReference type="ChEBI" id="CHEBI:78442"/>
        <dbReference type="ChEBI" id="CHEBI:78528"/>
        <dbReference type="ChEBI" id="CHEBI:456215"/>
        <dbReference type="EC" id="6.1.1.5"/>
    </reaction>
</comment>
<comment type="cofactor">
    <cofactor>
        <name>Zn(2+)</name>
        <dbReference type="ChEBI" id="CHEBI:29105"/>
    </cofactor>
    <text>Binds 1 zinc ion per subunit.</text>
</comment>
<comment type="biophysicochemical properties">
    <kinetics>
        <KM evidence="9">5 uM for isoleucine</KM>
        <KM evidence="9">0.4 mM for ATP</KM>
    </kinetics>
</comment>
<comment type="subunit">
    <text>Monomer.</text>
</comment>
<comment type="interaction">
    <interactant intactId="EBI-552928">
        <id>P00956</id>
    </interactant>
    <interactant intactId="EBI-552940">
        <id>P19930</id>
        <label>hyaD</label>
    </interactant>
    <organismsDiffer>false</organismsDiffer>
    <experiments>3</experiments>
</comment>
<comment type="interaction">
    <interactant intactId="EBI-552928">
        <id>P00956</id>
    </interactant>
    <interactant intactId="EBI-369930">
        <id>P02925</id>
        <label>rbsB</label>
    </interactant>
    <organismsDiffer>false</organismsDiffer>
    <experiments>3</experiments>
</comment>
<comment type="interaction">
    <interactant intactId="EBI-552928">
        <id>P00956</id>
    </interactant>
    <interactant intactId="EBI-301077">
        <id>P0CE47</id>
        <label>tufA</label>
    </interactant>
    <organismsDiffer>false</organismsDiffer>
    <experiments>2</experiments>
</comment>
<comment type="interaction">
    <interactant intactId="EBI-552928">
        <id>P00956</id>
    </interactant>
    <interactant intactId="EBI-549937">
        <id>P39336</id>
        <label>yjgL</label>
    </interactant>
    <organismsDiffer>false</organismsDiffer>
    <experiments>3</experiments>
</comment>
<comment type="subcellular location">
    <subcellularLocation>
        <location>Cytoplasm</location>
    </subcellularLocation>
</comment>
<comment type="domain">
    <text>IleRS has two distinct active sites: one for aminoacylation and one for editing. The misactivated valine is translocated from the active site to the editing site, which sterically excludes the correctly activated isoleucine. The single editing site contains two valyl binding pockets, one specific for each substrate (Val-AMP or Val-tRNA(Ile)).</text>
</comment>
<comment type="miscellaneous">
    <text>Strain PS102 is resistant to the antibiotic mupirocin (pseudomonic acid A), an Ile-analog that competitively inhibits activation by Ile-tRNA synthetase, thus inhibiting protein biosynthesis.</text>
</comment>
<comment type="similarity">
    <text evidence="13">Belongs to the class-I aminoacyl-tRNA synthetase family. IleS type 1 subfamily.</text>
</comment>
<organism>
    <name type="scientific">Escherichia coli (strain K12)</name>
    <dbReference type="NCBI Taxonomy" id="83333"/>
    <lineage>
        <taxon>Bacteria</taxon>
        <taxon>Pseudomonadati</taxon>
        <taxon>Pseudomonadota</taxon>
        <taxon>Gammaproteobacteria</taxon>
        <taxon>Enterobacterales</taxon>
        <taxon>Enterobacteriaceae</taxon>
        <taxon>Escherichia</taxon>
    </lineage>
</organism>
<evidence type="ECO:0000250" key="1"/>
<evidence type="ECO:0000269" key="2">
    <source>
    </source>
</evidence>
<evidence type="ECO:0000269" key="3">
    <source>
    </source>
</evidence>
<evidence type="ECO:0000269" key="4">
    <source>
    </source>
</evidence>
<evidence type="ECO:0000269" key="5">
    <source>
    </source>
</evidence>
<evidence type="ECO:0000269" key="6">
    <source>
    </source>
</evidence>
<evidence type="ECO:0000269" key="7">
    <source>
    </source>
</evidence>
<evidence type="ECO:0000269" key="8">
    <source>
    </source>
</evidence>
<evidence type="ECO:0000269" key="9">
    <source>
    </source>
</evidence>
<evidence type="ECO:0000269" key="10">
    <source>
    </source>
</evidence>
<evidence type="ECO:0000269" key="11">
    <source>
    </source>
</evidence>
<evidence type="ECO:0000269" key="12">
    <source>
    </source>
</evidence>
<evidence type="ECO:0000305" key="13"/>
<reference key="1">
    <citation type="journal article" date="1984" name="Science">
        <title>Specific sequence homology and three-dimensional structure of an aminoacyl transfer RNA synthetase.</title>
        <authorList>
            <person name="Webster T."/>
            <person name="Tsai H."/>
            <person name="Kula M."/>
            <person name="Mackie G.A."/>
            <person name="Schimmel P."/>
        </authorList>
    </citation>
    <scope>NUCLEOTIDE SEQUENCE [GENOMIC DNA]</scope>
    <scope>PARTIAL PROTEIN SEQUENCE</scope>
    <source>
        <strain>K12</strain>
        <strain>MRE-600</strain>
    </source>
</reference>
<reference key="2">
    <citation type="journal article" date="1994" name="J. Biol. Chem.">
        <title>Relationship of protein structure of isoleucyl-tRNA synthetase with pseudomonic acid resistance of Escherichia coli. A proposed mode of action of pseudomonic acid as an inhibitor of isoleucyl-tRNA synthetase.</title>
        <authorList>
            <person name="Yanagisawa T."/>
            <person name="Lee J.T."/>
            <person name="Wu H.C."/>
            <person name="Kawakami M."/>
        </authorList>
    </citation>
    <scope>NUCLEOTIDE SEQUENCE [GENOMIC DNA]</scope>
    <scope>PROTEIN SEQUENCE OF 2-11 AND 606-615</scope>
    <source>
        <strain>K12 / MC4100 / ATCC 35695 / DSM 6574</strain>
        <strain>PS102</strain>
    </source>
</reference>
<reference key="3">
    <citation type="journal article" date="1992" name="Nucleic Acids Res.">
        <title>Systematic sequencing of the Escherichia coli genome: analysis of the 0-2.4 min region.</title>
        <authorList>
            <person name="Yura T."/>
            <person name="Mori H."/>
            <person name="Nagai H."/>
            <person name="Nagata T."/>
            <person name="Ishihama A."/>
            <person name="Fujita N."/>
            <person name="Isono K."/>
            <person name="Mizobuchi K."/>
            <person name="Nakata A."/>
        </authorList>
    </citation>
    <scope>NUCLEOTIDE SEQUENCE [LARGE SCALE GENOMIC DNA]</scope>
    <source>
        <strain>K12</strain>
    </source>
</reference>
<reference key="4">
    <citation type="journal article" date="1997" name="Science">
        <title>The complete genome sequence of Escherichia coli K-12.</title>
        <authorList>
            <person name="Blattner F.R."/>
            <person name="Plunkett G. III"/>
            <person name="Bloch C.A."/>
            <person name="Perna N.T."/>
            <person name="Burland V."/>
            <person name="Riley M."/>
            <person name="Collado-Vides J."/>
            <person name="Glasner J.D."/>
            <person name="Rode C.K."/>
            <person name="Mayhew G.F."/>
            <person name="Gregor J."/>
            <person name="Davis N.W."/>
            <person name="Kirkpatrick H.A."/>
            <person name="Goeden M.A."/>
            <person name="Rose D.J."/>
            <person name="Mau B."/>
            <person name="Shao Y."/>
        </authorList>
    </citation>
    <scope>NUCLEOTIDE SEQUENCE [LARGE SCALE GENOMIC DNA]</scope>
    <source>
        <strain>K12 / MG1655 / ATCC 47076</strain>
    </source>
</reference>
<reference key="5">
    <citation type="journal article" date="2006" name="Mol. Syst. Biol.">
        <title>Highly accurate genome sequences of Escherichia coli K-12 strains MG1655 and W3110.</title>
        <authorList>
            <person name="Hayashi K."/>
            <person name="Morooka N."/>
            <person name="Yamamoto Y."/>
            <person name="Fujita K."/>
            <person name="Isono K."/>
            <person name="Choi S."/>
            <person name="Ohtsubo E."/>
            <person name="Baba T."/>
            <person name="Wanner B.L."/>
            <person name="Mori H."/>
            <person name="Horiuchi T."/>
        </authorList>
    </citation>
    <scope>NUCLEOTIDE SEQUENCE [LARGE SCALE GENOMIC DNA]</scope>
    <scope>SEQUENCE REVISION</scope>
    <source>
        <strain>K12 / W3110 / ATCC 27325 / DSM 5911</strain>
    </source>
</reference>
<reference key="6">
    <citation type="journal article" date="1985" name="J. Biol. Chem.">
        <title>Characterization of the ileS-lsp operon in Escherichia coli. Identification of an open reading frame upstream of the ileS gene and potential promoter(s) for the ileS-lsp operon.</title>
        <authorList>
            <person name="Kamio Y."/>
            <person name="Lin C.-K."/>
            <person name="Regue M."/>
            <person name="Wu H.C."/>
        </authorList>
    </citation>
    <scope>NUCLEOTIDE SEQUENCE [GENOMIC DNA] OF 1-71</scope>
</reference>
<reference key="7">
    <citation type="journal article" date="2009" name="Open Biochem. J.">
        <title>Primary Structure Revision and Active Site Mapping of E. Coli Isoleucyl-tRNA Synthetase by Means of Maldi Mass Spectrometry.</title>
        <authorList>
            <person name="Baouz S."/>
            <person name="Schmitter J.M."/>
            <person name="Chenoune L."/>
            <person name="Beauvallet C."/>
            <person name="Blanquet S."/>
            <person name="Woisard A."/>
            <person name="Hountondji C."/>
        </authorList>
    </citation>
    <scope>PROTEIN SEQUENCE OF 2-938</scope>
    <scope>FUNCTION</scope>
    <scope>ATP-BINDING</scope>
    <source>
        <strain>EM20031</strain>
    </source>
</reference>
<reference key="8">
    <citation type="journal article" date="1984" name="FEBS Lett.">
        <title>Nucleotide sequence of the lspA gene, the structural gene for lipoprotein signal peptidase of Escherichia coli.</title>
        <authorList>
            <person name="Yu F."/>
            <person name="Yamada H."/>
            <person name="Daishima K."/>
            <person name="Mizushima S."/>
        </authorList>
    </citation>
    <scope>NUCLEOTIDE SEQUENCE [GENOMIC DNA] OF 794-938</scope>
</reference>
<reference key="9">
    <citation type="journal article" date="1984" name="Proc. Natl. Acad. Sci. U.S.A.">
        <title>Nucleotide sequence of the Escherichia coli prolipoprotein signal peptidase (lsp) gene.</title>
        <authorList>
            <person name="Innis M.A."/>
            <person name="Tokunaga M."/>
            <person name="Williams M.E."/>
            <person name="Loranger J.M."/>
            <person name="Chang S.-Y."/>
            <person name="Chang S."/>
            <person name="Wu H.C."/>
        </authorList>
    </citation>
    <scope>NUCLEOTIDE SEQUENCE [GENOMIC DNA] OF 795-938</scope>
</reference>
<reference key="10">
    <citation type="journal article" date="1988" name="Science">
        <title>Evidence from cassette mutagenesis for a structure-function motif in a protein of unknown structure.</title>
        <authorList>
            <person name="Clarke N.D."/>
            <person name="Lien D.C."/>
            <person name="Schimmel P."/>
        </authorList>
    </citation>
    <scope>FUNCTION</scope>
    <scope>CATALYTIC ACTIVITY</scope>
    <scope>MUTAGENESIS OF GLY-94; CYS-97 AND ILE-102</scope>
    <scope>KINETIC PARAMETERS</scope>
</reference>
<reference key="11">
    <citation type="journal article" date="1997" name="Electrophoresis">
        <title>Escherichia coli proteome analysis using the gene-protein database.</title>
        <authorList>
            <person name="VanBogelen R.A."/>
            <person name="Abshire K.Z."/>
            <person name="Moldover B."/>
            <person name="Olson E.R."/>
            <person name="Neidhardt F.C."/>
        </authorList>
    </citation>
    <scope>IDENTIFICATION BY 2D-GEL</scope>
</reference>
<reference key="12">
    <citation type="journal article" date="1998" name="Science">
        <title>Enzyme structure with two catalytic sites for double-sieve selection of substrate.</title>
        <authorList>
            <person name="Nureki O."/>
            <person name="Vassylyev D.G."/>
            <person name="Tateno M."/>
            <person name="Shimada A."/>
            <person name="Nakama T."/>
            <person name="Fukai S."/>
            <person name="Konno M."/>
            <person name="Hendrickson T.L."/>
            <person name="Schimmel P."/>
            <person name="Yokoyama S."/>
        </authorList>
    </citation>
    <scope>FUNCTION</scope>
    <scope>MUTAGENESIS OF THR-241; THR-243; THR-246 AND ASN-250</scope>
</reference>
<reference key="13">
    <citation type="journal article" date="1999" name="Mol. Cell">
        <title>Transfer RNA-dependent translocation of misactivated amino acids to prevent errors in protein synthesis.</title>
        <authorList>
            <person name="Nomanbhoy T.K."/>
            <person name="Hendrickson T.L."/>
            <person name="Schimmel P."/>
        </authorList>
    </citation>
    <scope>FUNCTION IN EDITING ACTIVITY</scope>
</reference>
<reference key="14">
    <citation type="journal article" date="2000" name="Biochemistry">
        <title>Errors from selective disruption of the editing center in a tRNA synthetase.</title>
        <authorList>
            <person name="Hendrickson T.L."/>
            <person name="Nomanbhoy T.K."/>
            <person name="Schimmel P."/>
        </authorList>
    </citation>
    <scope>FUNCTION</scope>
    <scope>MUTAGENESIS OF THR-242 AND ASN-250</scope>
</reference>
<reference key="15">
    <citation type="journal article" date="2002" name="Mol. Cell">
        <title>Mutational separation of two pathways for editing by a class I tRNA synthetase.</title>
        <authorList>
            <person name="Hendrickson T.L."/>
            <person name="Nomanbhoy T.K."/>
            <person name="de Crecy-Lagard V."/>
            <person name="Fukai S."/>
            <person name="Nureki O."/>
            <person name="Yokoyama S."/>
            <person name="Schimmel P."/>
        </authorList>
    </citation>
    <scope>FUNCTION</scope>
    <scope>MUTAGENESIS OF THR-243 AND HIS-333</scope>
    <scope>PRESENCE OF TWO EDITING SUBSITES</scope>
</reference>
<reference key="16">
    <citation type="journal article" date="2002" name="Proc. Natl. Acad. Sci. U.S.A.">
        <title>Blocking site-to-site translocation of a misactivatd amino acid by mutation of a class I tRNA synthetase.</title>
        <authorList>
            <person name="Bishop A.C."/>
            <person name="Nomanbhoy T.K."/>
            <person name="Schimmel P."/>
        </authorList>
    </citation>
    <scope>FUNCTION</scope>
    <scope>MUTAGENESIS OF ASP-342</scope>
    <scope>TRANSLOCATION OF MISACTIVATED VALINE</scope>
</reference>
<reference key="17">
    <citation type="journal article" date="2003" name="Proc. Natl. Acad. Sci. U.S.A.">
        <title>Interstice mutations that block site-to-site translocation of a misactivated amino acid bound to a class I tRNA synthetase.</title>
        <authorList>
            <person name="Bishop A.C."/>
            <person name="Beebe K."/>
            <person name="Schimmel P.R."/>
        </authorList>
    </citation>
    <scope>FUNCTION</scope>
    <scope>MUTAGENESIS OF LYS-183 AND TRP-421</scope>
</reference>
<reference key="18">
    <citation type="journal article" date="2009" name="Mol. Cell. Proteomics">
        <title>Lysine acetylation is a highly abundant and evolutionarily conserved modification in Escherichia coli.</title>
        <authorList>
            <person name="Zhang J."/>
            <person name="Sprung R."/>
            <person name="Pei J."/>
            <person name="Tan X."/>
            <person name="Kim S."/>
            <person name="Zhu H."/>
            <person name="Liu C.F."/>
            <person name="Grishin N.V."/>
            <person name="Zhao Y."/>
        </authorList>
    </citation>
    <scope>ACETYLATION [LARGE SCALE ANALYSIS] AT LYS-183</scope>
    <scope>IDENTIFICATION BY MASS SPECTROMETRY</scope>
    <source>
        <strain>K12 / JW1106</strain>
        <strain>K12 / MG1655 / ATCC 47076</strain>
    </source>
</reference>
<gene>
    <name type="primary">ileS</name>
    <name type="synonym">ilvS</name>
    <name type="ordered locus">b0026</name>
    <name type="ordered locus">JW0024</name>
</gene>
<accession>P00956</accession>
<accession>P78038</accession>
<accession>Q59429</accession>
<name>SYI_ECOLI</name>
<protein>
    <recommendedName>
        <fullName>Isoleucine--tRNA ligase</fullName>
        <ecNumber evidence="9">6.1.1.5</ecNumber>
    </recommendedName>
    <alternativeName>
        <fullName>Isoleucyl-tRNA synthetase</fullName>
        <shortName>IleRS</shortName>
    </alternativeName>
</protein>
<keyword id="KW-0007">Acetylation</keyword>
<keyword id="KW-0030">Aminoacyl-tRNA synthetase</keyword>
<keyword id="KW-0046">Antibiotic resistance</keyword>
<keyword id="KW-0067">ATP-binding</keyword>
<keyword id="KW-0963">Cytoplasm</keyword>
<keyword id="KW-0903">Direct protein sequencing</keyword>
<keyword id="KW-0436">Ligase</keyword>
<keyword id="KW-0479">Metal-binding</keyword>
<keyword id="KW-0547">Nucleotide-binding</keyword>
<keyword id="KW-0648">Protein biosynthesis</keyword>
<keyword id="KW-1185">Reference proteome</keyword>
<keyword id="KW-0862">Zinc</keyword>
<feature type="initiator methionine" description="Removed" evidence="10 11">
    <location>
        <position position="1"/>
    </location>
</feature>
<feature type="chain" id="PRO_0000098384" description="Isoleucine--tRNA ligase">
    <location>
        <begin position="2"/>
        <end position="938"/>
    </location>
</feature>
<feature type="short sequence motif" description="'HIGH' region">
    <location>
        <begin position="58"/>
        <end position="68"/>
    </location>
</feature>
<feature type="short sequence motif" description="'KMSKS' region">
    <location>
        <begin position="602"/>
        <end position="606"/>
    </location>
</feature>
<feature type="binding site" evidence="1">
    <location>
        <position position="561"/>
    </location>
    <ligand>
        <name>L-isoleucyl-5'-AMP</name>
        <dbReference type="ChEBI" id="CHEBI:178002"/>
    </ligand>
</feature>
<feature type="binding site" evidence="8">
    <location>
        <position position="602"/>
    </location>
    <ligand>
        <name>ATP</name>
        <dbReference type="ChEBI" id="CHEBI:30616"/>
    </ligand>
</feature>
<feature type="binding site" evidence="8">
    <location>
        <position position="605"/>
    </location>
    <ligand>
        <name>ATP</name>
        <dbReference type="ChEBI" id="CHEBI:30616"/>
    </ligand>
</feature>
<feature type="binding site" evidence="1">
    <location>
        <position position="901"/>
    </location>
    <ligand>
        <name>Zn(2+)</name>
        <dbReference type="ChEBI" id="CHEBI:29105"/>
    </ligand>
</feature>
<feature type="binding site" evidence="1">
    <location>
        <position position="904"/>
    </location>
    <ligand>
        <name>Zn(2+)</name>
        <dbReference type="ChEBI" id="CHEBI:29105"/>
    </ligand>
</feature>
<feature type="binding site" evidence="1">
    <location>
        <position position="921"/>
    </location>
    <ligand>
        <name>Zn(2+)</name>
        <dbReference type="ChEBI" id="CHEBI:29105"/>
    </ligand>
</feature>
<feature type="binding site" evidence="1">
    <location>
        <position position="924"/>
    </location>
    <ligand>
        <name>Zn(2+)</name>
        <dbReference type="ChEBI" id="CHEBI:29105"/>
    </ligand>
</feature>
<feature type="modified residue" description="N6-acetyllysine" evidence="7">
    <location>
        <position position="183"/>
    </location>
</feature>
<feature type="sequence variant" description="In strain: EM20031, MRE-600; AA sequence." evidence="8 10">
    <original>EL</original>
    <variation>DV</variation>
    <location>
        <begin position="300"/>
        <end position="301"/>
    </location>
</feature>
<feature type="sequence variant" description="In strain: MRE-600; AA sequence." evidence="10">
    <original>R</original>
    <variation>C</variation>
    <location>
        <position position="587"/>
    </location>
</feature>
<feature type="sequence variant" description="In strain: PS102." evidence="11">
    <original>F</original>
    <variation>L</variation>
    <location>
        <position position="594"/>
    </location>
</feature>
<feature type="sequence variant" description="In strain: MRE-600; AA sequence." evidence="10">
    <original>E</original>
    <variation>Q</variation>
    <location>
        <position position="637"/>
    </location>
</feature>
<feature type="sequence variant" description="In strain: EM20031; AA sequence." evidence="8">
    <original>G</original>
    <variation>V</variation>
    <location>
        <position position="724"/>
    </location>
</feature>
<feature type="sequence variant" description="In strain: EM20031, MRE-600; AA sequence." evidence="8 10">
    <original>A</original>
    <variation>P</variation>
    <location>
        <position position="738"/>
    </location>
</feature>
<feature type="sequence variant" description="In strain: EM20031; AA sequence." evidence="8">
    <original>ADSV</original>
    <variation>RTVW</variation>
    <location>
        <begin position="740"/>
        <end position="743"/>
    </location>
</feature>
<feature type="sequence variant" description="In strain: MRE-600; AA sequence." evidence="10">
    <original>F</original>
    <variation>L</variation>
    <location>
        <position position="787"/>
    </location>
</feature>
<feature type="sequence variant" description="In strain: MRE-600; AA sequence." evidence="10">
    <original>K</original>
    <variation>N</variation>
    <location>
        <position position="830"/>
    </location>
</feature>
<feature type="mutagenesis site" description="6000-fold increase in Km for isoleucine and 4-fold increase in Km for ATP, with no effect on activity." evidence="9">
    <original>G</original>
    <variation>R</variation>
    <location>
        <position position="94"/>
    </location>
</feature>
<feature type="mutagenesis site" description="No effect on activity." evidence="9">
    <original>C</original>
    <variation>S</variation>
    <location>
        <position position="97"/>
    </location>
</feature>
<feature type="mutagenesis site" description="No significant effect on activity." evidence="9">
    <original>I</original>
    <variation>N</variation>
    <location>
        <position position="102"/>
    </location>
</feature>
<feature type="mutagenesis site" description="Abolishes translocation from the aminoacylation site to the editing site, without effect on aminoacylation activity and posttransfer editing; when associated with A-421." evidence="6">
    <original>K</original>
    <variation>A</variation>
    <location>
        <position position="183"/>
    </location>
</feature>
<feature type="mutagenesis site" description="Nearly the same editing activity as the wild-type." evidence="12">
    <original>T</original>
    <variation>A</variation>
    <location>
        <position position="241"/>
    </location>
</feature>
<feature type="mutagenesis site" description="Abolishes editing activity against valine, with little change in aminoacylation activity; when associated with A-250." evidence="3">
    <original>T</original>
    <variation>A</variation>
    <location>
        <position position="242"/>
    </location>
</feature>
<feature type="mutagenesis site" description="Abolishes editing activity against valine, with little change in aminoacylation activity." evidence="3">
    <original>T</original>
    <variation>P</variation>
    <location>
        <position position="242"/>
    </location>
</feature>
<feature type="mutagenesis site" description="Abolishes editing activity against valine, with little change in aminoacylation activity." evidence="5 12">
    <original>T</original>
    <variation>A</variation>
    <location>
        <position position="243"/>
    </location>
</feature>
<feature type="mutagenesis site" description="Abolishes pretransfer editing." evidence="5 12">
    <original>T</original>
    <variation>R</variation>
    <location>
        <position position="243"/>
    </location>
</feature>
<feature type="mutagenesis site" description="Nearly the same editing activity as the wild-type." evidence="12">
    <original>T</original>
    <variation>A</variation>
    <location>
        <position position="246"/>
    </location>
</feature>
<feature type="mutagenesis site" description="Abolishes editing activity against valine, with little change in aminoacylation activity." evidence="3 12">
    <original>N</original>
    <variation>A</variation>
    <location>
        <position position="250"/>
    </location>
</feature>
<feature type="mutagenesis site" description="Alters the specificity for hydrolysis of the aminoacyl tRNA ester, with no effect on pretransfer editing." evidence="5">
    <original>H</original>
    <variation>A</variation>
    <location>
        <position position="333"/>
    </location>
</feature>
<feature type="mutagenesis site" description="Strong decrease in total editing and deacylation activities. Severely deficient in translocation from the aminoacylation site to the editing site." evidence="4">
    <original>D</original>
    <variation>A</variation>
    <variation>N</variation>
    <location>
        <position position="342"/>
    </location>
</feature>
<feature type="mutagenesis site" description="Reduces 2- to 3-fold the total editing activity and 2-fold the deacylation activity. Moderately reduces translocation from the aminoacylation site to the editing site." evidence="4">
    <original>D</original>
    <variation>E</variation>
    <location>
        <position position="342"/>
    </location>
</feature>
<feature type="mutagenesis site" description="Abolishes translocation from the aminoacylation site to the editing site, without effect on aminoacylation activity and posttransfer editing; when associated with A-183." evidence="6">
    <original>W</original>
    <variation>A</variation>
    <location>
        <position position="421"/>
    </location>
</feature>